<keyword id="KW-0002">3D-structure</keyword>
<keyword id="KW-0963">Cytoplasm</keyword>
<keyword id="KW-0227">DNA damage</keyword>
<keyword id="KW-0233">DNA recombination</keyword>
<keyword id="KW-0234">DNA repair</keyword>
<keyword id="KW-0235">DNA replication</keyword>
<keyword id="KW-0238">DNA-binding</keyword>
<keyword id="KW-0597">Phosphoprotein</keyword>
<keyword id="KW-1185">Reference proteome</keyword>
<comment type="function">
    <text evidence="4 6 7 10 11 14">Plays an important role in DNA replication, recombination and repair (PubMed:21170359). Binds to single-stranded (ss)DNA and to an array of partner proteins to recruit them to their sites of action during DNA metabolism (PubMed:15686560, PubMed:17853894, PubMed:21170359). Associates with oriC, this requires DnaA (PubMed:19968790). SsbA binding to ssDNA prevents DnaB and DnaD individually from binding to DNA (PubMed:15686560). Has a 20-fold higher affinity for ssDNA than SsbB; SsbA and DprA activate the homologous DNA strand exchange function of RecA-ATP (PubMed:25138221). Enhances the activity of 3'-5' DNA helicase RecQ (PubMed:25246477).</text>
</comment>
<comment type="subunit">
    <text evidence="1 5 6 8 9 11 12">Homotetramer. Interacts with proteins involved in DNA metabolism such as PriA, RecQ, RecG, RecS, DnaE, RarA, RecJ, RecO, SbcC, RecD2 (formerly YrrC), XseA and Ung (PubMed:21170359). Interacts with RecQ via its 10 C-terminal residues (PubMed:17853894, PubMed:25246477). Interacts with RecD2 (PubMed:24443534, PubMed:35234892).</text>
</comment>
<comment type="subcellular location">
    <subcellularLocation>
        <location evidence="8">Cytoplasm</location>
        <location evidence="8">Nucleoid</location>
    </subcellularLocation>
    <text evidence="7 8">Can be found at the replication fork (PubMed:19968790, PubMed:21170359).</text>
</comment>
<comment type="induction">
    <text evidence="3">Strongly expressed during exponential growth, decreases 2-4-fold in stationary phase, part of the rpsF-ssbA-rpsR and the ychF-rpsF-ssbA-rpsR operons (PubMed:14762004). The operon is induced by DNA damage by mitomycin C (PubMed:14762004).</text>
</comment>
<comment type="domain">
    <text evidence="6 8">The C-terminus is required for interaction with a number of interacting proteins (PubMed:17853894, PubMed:21170359). The C-terminus acts as a hub to recruit proteins to active chromosomal forks (PubMed:21170359).</text>
</comment>
<comment type="PTM">
    <text evidence="5">Phosphorylated by YwqD, which increases ssDNA affinity; dephosphorylated by YwqE.</text>
</comment>
<accession>P37455</accession>
<sequence>MLNRVVLVGRLTKDPELRYTPNGAAVATFTLAVNRTFTNQSGEREADFINCVTWRRQAENVANFLKKGSLAGVDGRLQTRNYENQQGQRVFVTEVQAESVQFLEPKNGGGSGSGGYNEGNSGGGQYFGGGQNDNPFGGNQNNQRRNQGNSFNDDPFANDGKPIDISDDDLPF</sequence>
<evidence type="ECO:0000255" key="1">
    <source>
        <dbReference type="HAMAP-Rule" id="MF_00984"/>
    </source>
</evidence>
<evidence type="ECO:0000256" key="2">
    <source>
        <dbReference type="SAM" id="MobiDB-lite"/>
    </source>
</evidence>
<evidence type="ECO:0000269" key="3">
    <source>
    </source>
</evidence>
<evidence type="ECO:0000269" key="4">
    <source>
    </source>
</evidence>
<evidence type="ECO:0000269" key="5">
    <source>
    </source>
</evidence>
<evidence type="ECO:0000269" key="6">
    <source>
    </source>
</evidence>
<evidence type="ECO:0000269" key="7">
    <source>
    </source>
</evidence>
<evidence type="ECO:0000269" key="8">
    <source>
    </source>
</evidence>
<evidence type="ECO:0000269" key="9">
    <source>
    </source>
</evidence>
<evidence type="ECO:0000269" key="10">
    <source>
    </source>
</evidence>
<evidence type="ECO:0000269" key="11">
    <source>
    </source>
</evidence>
<evidence type="ECO:0000269" key="12">
    <source>
    </source>
</evidence>
<evidence type="ECO:0000305" key="13"/>
<evidence type="ECO:0000305" key="14">
    <source>
    </source>
</evidence>
<evidence type="ECO:0007829" key="15">
    <source>
        <dbReference type="PDB" id="6BHW"/>
    </source>
</evidence>
<feature type="chain" id="PRO_0000096005" description="Single-stranded DNA-binding protein A">
    <location>
        <begin position="1"/>
        <end position="172"/>
    </location>
</feature>
<feature type="domain" description="SSB" evidence="1">
    <location>
        <begin position="1"/>
        <end position="104"/>
    </location>
</feature>
<feature type="region of interest" description="Disordered" evidence="2">
    <location>
        <begin position="103"/>
        <end position="172"/>
    </location>
</feature>
<feature type="short sequence motif" description="Important for interaction with partner proteins" evidence="1">
    <location>
        <begin position="167"/>
        <end position="172"/>
    </location>
</feature>
<feature type="compositionally biased region" description="Gly residues" evidence="2">
    <location>
        <begin position="107"/>
        <end position="131"/>
    </location>
</feature>
<feature type="compositionally biased region" description="Low complexity" evidence="2">
    <location>
        <begin position="132"/>
        <end position="149"/>
    </location>
</feature>
<feature type="modified residue" description="Phosphotyrosine" evidence="5">
    <location>
        <position position="82"/>
    </location>
</feature>
<feature type="mutagenesis site" description="3-fold reduced viability, extreme UV and mitomycin C sensitivity, temperature-sensitive above 47 degrees Celsius, multiple proteins no longer localize with SSB. Reduced induction of the SOS response." evidence="6 8">
    <location>
        <begin position="138"/>
        <end position="172"/>
    </location>
</feature>
<feature type="mutagenesis site" description="Poorly stimulates 3'-5' helicase activity of RecQ." evidence="11">
    <location>
        <begin position="163"/>
        <end position="172"/>
    </location>
</feature>
<feature type="mutagenesis site" description="3-fold reduced viability, extreme UV and mitomycin C sensitivity, multiple proteins no longer localize with SSB." evidence="8">
    <location>
        <begin position="164"/>
        <end position="172"/>
    </location>
</feature>
<feature type="strand" evidence="15">
    <location>
        <begin position="2"/>
        <end position="13"/>
    </location>
</feature>
<feature type="strand" evidence="15">
    <location>
        <begin position="16"/>
        <end position="19"/>
    </location>
</feature>
<feature type="strand" evidence="15">
    <location>
        <begin position="25"/>
        <end position="34"/>
    </location>
</feature>
<feature type="strand" evidence="15">
    <location>
        <begin position="46"/>
        <end position="54"/>
    </location>
</feature>
<feature type="helix" evidence="15">
    <location>
        <begin position="56"/>
        <end position="64"/>
    </location>
</feature>
<feature type="strand" evidence="15">
    <location>
        <begin position="70"/>
        <end position="79"/>
    </location>
</feature>
<feature type="strand" evidence="15">
    <location>
        <begin position="93"/>
        <end position="102"/>
    </location>
</feature>
<reference key="1">
    <citation type="journal article" date="1994" name="DNA Res.">
        <title>Systematic sequencing of the 180 kilobase region of the Bacillus subtilis chromosome containing the replication origin.</title>
        <authorList>
            <person name="Ogasawara N."/>
            <person name="Nakai S."/>
            <person name="Yoshikawa H."/>
        </authorList>
    </citation>
    <scope>NUCLEOTIDE SEQUENCE [GENOMIC DNA]</scope>
    <source>
        <strain>168</strain>
    </source>
</reference>
<reference key="2">
    <citation type="journal article" date="1997" name="Nature">
        <title>The complete genome sequence of the Gram-positive bacterium Bacillus subtilis.</title>
        <authorList>
            <person name="Kunst F."/>
            <person name="Ogasawara N."/>
            <person name="Moszer I."/>
            <person name="Albertini A.M."/>
            <person name="Alloni G."/>
            <person name="Azevedo V."/>
            <person name="Bertero M.G."/>
            <person name="Bessieres P."/>
            <person name="Bolotin A."/>
            <person name="Borchert S."/>
            <person name="Borriss R."/>
            <person name="Boursier L."/>
            <person name="Brans A."/>
            <person name="Braun M."/>
            <person name="Brignell S.C."/>
            <person name="Bron S."/>
            <person name="Brouillet S."/>
            <person name="Bruschi C.V."/>
            <person name="Caldwell B."/>
            <person name="Capuano V."/>
            <person name="Carter N.M."/>
            <person name="Choi S.-K."/>
            <person name="Codani J.-J."/>
            <person name="Connerton I.F."/>
            <person name="Cummings N.J."/>
            <person name="Daniel R.A."/>
            <person name="Denizot F."/>
            <person name="Devine K.M."/>
            <person name="Duesterhoeft A."/>
            <person name="Ehrlich S.D."/>
            <person name="Emmerson P.T."/>
            <person name="Entian K.-D."/>
            <person name="Errington J."/>
            <person name="Fabret C."/>
            <person name="Ferrari E."/>
            <person name="Foulger D."/>
            <person name="Fritz C."/>
            <person name="Fujita M."/>
            <person name="Fujita Y."/>
            <person name="Fuma S."/>
            <person name="Galizzi A."/>
            <person name="Galleron N."/>
            <person name="Ghim S.-Y."/>
            <person name="Glaser P."/>
            <person name="Goffeau A."/>
            <person name="Golightly E.J."/>
            <person name="Grandi G."/>
            <person name="Guiseppi G."/>
            <person name="Guy B.J."/>
            <person name="Haga K."/>
            <person name="Haiech J."/>
            <person name="Harwood C.R."/>
            <person name="Henaut A."/>
            <person name="Hilbert H."/>
            <person name="Holsappel S."/>
            <person name="Hosono S."/>
            <person name="Hullo M.-F."/>
            <person name="Itaya M."/>
            <person name="Jones L.-M."/>
            <person name="Joris B."/>
            <person name="Karamata D."/>
            <person name="Kasahara Y."/>
            <person name="Klaerr-Blanchard M."/>
            <person name="Klein C."/>
            <person name="Kobayashi Y."/>
            <person name="Koetter P."/>
            <person name="Koningstein G."/>
            <person name="Krogh S."/>
            <person name="Kumano M."/>
            <person name="Kurita K."/>
            <person name="Lapidus A."/>
            <person name="Lardinois S."/>
            <person name="Lauber J."/>
            <person name="Lazarevic V."/>
            <person name="Lee S.-M."/>
            <person name="Levine A."/>
            <person name="Liu H."/>
            <person name="Masuda S."/>
            <person name="Mauel C."/>
            <person name="Medigue C."/>
            <person name="Medina N."/>
            <person name="Mellado R.P."/>
            <person name="Mizuno M."/>
            <person name="Moestl D."/>
            <person name="Nakai S."/>
            <person name="Noback M."/>
            <person name="Noone D."/>
            <person name="O'Reilly M."/>
            <person name="Ogawa K."/>
            <person name="Ogiwara A."/>
            <person name="Oudega B."/>
            <person name="Park S.-H."/>
            <person name="Parro V."/>
            <person name="Pohl T.M."/>
            <person name="Portetelle D."/>
            <person name="Porwollik S."/>
            <person name="Prescott A.M."/>
            <person name="Presecan E."/>
            <person name="Pujic P."/>
            <person name="Purnelle B."/>
            <person name="Rapoport G."/>
            <person name="Rey M."/>
            <person name="Reynolds S."/>
            <person name="Rieger M."/>
            <person name="Rivolta C."/>
            <person name="Rocha E."/>
            <person name="Roche B."/>
            <person name="Rose M."/>
            <person name="Sadaie Y."/>
            <person name="Sato T."/>
            <person name="Scanlan E."/>
            <person name="Schleich S."/>
            <person name="Schroeter R."/>
            <person name="Scoffone F."/>
            <person name="Sekiguchi J."/>
            <person name="Sekowska A."/>
            <person name="Seror S.J."/>
            <person name="Serror P."/>
            <person name="Shin B.-S."/>
            <person name="Soldo B."/>
            <person name="Sorokin A."/>
            <person name="Tacconi E."/>
            <person name="Takagi T."/>
            <person name="Takahashi H."/>
            <person name="Takemaru K."/>
            <person name="Takeuchi M."/>
            <person name="Tamakoshi A."/>
            <person name="Tanaka T."/>
            <person name="Terpstra P."/>
            <person name="Tognoni A."/>
            <person name="Tosato V."/>
            <person name="Uchiyama S."/>
            <person name="Vandenbol M."/>
            <person name="Vannier F."/>
            <person name="Vassarotti A."/>
            <person name="Viari A."/>
            <person name="Wambutt R."/>
            <person name="Wedler E."/>
            <person name="Wedler H."/>
            <person name="Weitzenegger T."/>
            <person name="Winters P."/>
            <person name="Wipat A."/>
            <person name="Yamamoto H."/>
            <person name="Yamane K."/>
            <person name="Yasumoto K."/>
            <person name="Yata K."/>
            <person name="Yoshida K."/>
            <person name="Yoshikawa H.-F."/>
            <person name="Zumstein E."/>
            <person name="Yoshikawa H."/>
            <person name="Danchin A."/>
        </authorList>
    </citation>
    <scope>NUCLEOTIDE SEQUENCE [LARGE SCALE GENOMIC DNA]</scope>
    <source>
        <strain>168</strain>
    </source>
</reference>
<reference key="3">
    <citation type="journal article" date="2004" name="J. Bacteriol.">
        <title>Differential expression of two paralogous genes of Bacillus subtilis encoding single-stranded DNA binding protein.</title>
        <authorList>
            <person name="Lindner C."/>
            <person name="Nijland R."/>
            <person name="van Hartskamp M."/>
            <person name="Bron S."/>
            <person name="Hamoen L.W."/>
            <person name="Kuipers O.P."/>
        </authorList>
    </citation>
    <scope>INDUCTION</scope>
    <source>
        <strain>168</strain>
    </source>
</reference>
<reference key="4">
    <citation type="journal article" date="2005" name="Mol. Microbiol.">
        <title>Functional interplay between the Bacillus subtilis DnaD and DnaB proteins essential for initiation and re-initiation of DNA replication.</title>
        <authorList>
            <person name="Bruand C."/>
            <person name="Velten M."/>
            <person name="McGovern S."/>
            <person name="Marsin S."/>
            <person name="Serena C."/>
            <person name="Ehrlich S.D."/>
            <person name="Polard P."/>
        </authorList>
    </citation>
    <scope>DNA-BINDING</scope>
    <source>
        <strain>168</strain>
    </source>
</reference>
<reference key="5">
    <citation type="journal article" date="2006" name="Nucleic Acids Res.">
        <title>Bacterial single-stranded DNA-binding proteins are phosphorylated on tyrosine.</title>
        <authorList>
            <person name="Mijakovic I."/>
            <person name="Petranovic D."/>
            <person name="Macek B."/>
            <person name="Cepo T."/>
            <person name="Mann M."/>
            <person name="Davies J."/>
            <person name="Jensen P.R."/>
            <person name="Vujaklija D."/>
        </authorList>
    </citation>
    <scope>PHOSPHORYLATION AT TYR-82</scope>
    <scope>SUBUNIT</scope>
    <scope>IDENTIFICATION BY MASS SPECTROMETRY</scope>
    <source>
        <strain>168</strain>
    </source>
</reference>
<reference key="6">
    <citation type="journal article" date="2007" name="EMBO J.">
        <title>Anticipating chromosomal replication fork arrest: SSB targets repair DNA helicases to active forks.</title>
        <authorList>
            <person name="Lecointe F."/>
            <person name="Serena C."/>
            <person name="Velten M."/>
            <person name="Costes A."/>
            <person name="McGovern S."/>
            <person name="Meile J.C."/>
            <person name="Errington J."/>
            <person name="Ehrlich S.D."/>
            <person name="Noirot P."/>
            <person name="Polard P."/>
        </authorList>
    </citation>
    <scope>FUNCTION</scope>
    <scope>INTERACTION WITH PRIA; RECQ AND RECS</scope>
    <scope>DOMAIN</scope>
    <scope>MUTAGENESIS OF 138-GLY--PHE-172</scope>
    <source>
        <strain>168</strain>
    </source>
</reference>
<reference key="7">
    <citation type="journal article" date="2010" name="Mol. Microbiol.">
        <title>Ordered association of helicase loader proteins with the Bacillus subtilis origin of replication in vivo.</title>
        <authorList>
            <person name="Smits W.K."/>
            <person name="Goranov A.I."/>
            <person name="Grossman A.D."/>
        </authorList>
    </citation>
    <scope>DNA REPLISOME ASSEMBLY</scope>
    <scope>SUBUNIT</scope>
    <scope>SUBCELLULAR LOCATION</scope>
</reference>
<reference key="8">
    <citation type="journal article" date="2010" name="PLoS Genet.">
        <title>The C-terminal domain of the bacterial SSB protein acts as a DNA maintenance hub at active chromosome replication forks.</title>
        <authorList>
            <person name="Costes A."/>
            <person name="Lecointe F."/>
            <person name="McGovern S."/>
            <person name="Quevillon-Cheruel S."/>
            <person name="Polard P."/>
        </authorList>
    </citation>
    <scope>FUNCTION</scope>
    <scope>INTERACTION WITH PARTNER PROTEINS</scope>
    <scope>SUBCELLULAR LOCATION</scope>
    <scope>DOMAIN</scope>
    <scope>DNA-BINDING</scope>
    <scope>MUTAGENESIS OF 138-GLY--PHE-172 AND 164-ASP--PHE-172</scope>
    <source>
        <strain>168</strain>
    </source>
</reference>
<reference key="9">
    <citation type="journal article" date="2014" name="J. Biol. Chem.">
        <title>Roles of Bacillus subtilis DprA and SsbA in RecA-mediated genetic recombination.</title>
        <authorList>
            <person name="Yadav T."/>
            <person name="Carrasco B."/>
            <person name="Serrano E."/>
            <person name="Alonso J.C."/>
        </authorList>
    </citation>
    <scope>FUNCTION</scope>
</reference>
<reference key="10">
    <citation type="journal article" date="2014" name="J. Bacteriol.">
        <title>RecD2 helicase limits replication fork stress in Bacillus subtilis.</title>
        <authorList>
            <person name="Walsh B.W."/>
            <person name="Bolz S.A."/>
            <person name="Wessel S.R."/>
            <person name="Schroeder J.W."/>
            <person name="Keck J.L."/>
            <person name="Simmons L.A."/>
        </authorList>
    </citation>
    <scope>INTERACTION WITH RECD2</scope>
    <source>
        <strain>168 / PY79</strain>
    </source>
</reference>
<reference key="11">
    <citation type="journal article" date="2014" name="J. Bacteriol.">
        <title>Characterization of biochemical properties of Bacillus subtilis RecQ helicase.</title>
        <authorList>
            <person name="Qin W."/>
            <person name="Liu N.N."/>
            <person name="Wang L."/>
            <person name="Zhou M."/>
            <person name="Ren H."/>
            <person name="Bugnard E."/>
            <person name="Liu J.L."/>
            <person name="Zhang L.H."/>
            <person name="Vendome J."/>
            <person name="Hu J.S."/>
            <person name="Xi X.G."/>
        </authorList>
    </citation>
    <scope>FUNCTION</scope>
    <scope>INTERACTION WITH RECQ</scope>
    <scope>DNA-BINDING</scope>
    <scope>MUTAGENESIS OF 163-ILE--PHE-172</scope>
</reference>
<reference key="12">
    <citation type="journal article" date="2022" name="Nucleic Acids Res.">
        <title>The RecD2 helicase balances RecA activities.</title>
        <authorList>
            <person name="Ramos C."/>
            <person name="Hernandez-Tamayo R."/>
            <person name="Lopez-Sanz M."/>
            <person name="Carrasco B."/>
            <person name="Serrano E."/>
            <person name="Alonso J.C."/>
            <person name="Graumann P.L."/>
            <person name="Ayora S."/>
        </authorList>
    </citation>
    <scope>INTERACTION WITH RECD2</scope>
    <source>
        <strain>168 / YB886 / BG214</strain>
    </source>
</reference>
<name>SSBA_BACSU</name>
<protein>
    <recommendedName>
        <fullName evidence="1">Single-stranded DNA-binding protein A</fullName>
        <shortName evidence="1">SSB A</shortName>
    </recommendedName>
    <alternativeName>
        <fullName evidence="13">SSB</fullName>
    </alternativeName>
</protein>
<gene>
    <name type="primary">ssbA</name>
    <name type="ordered locus">BSU40900</name>
</gene>
<dbReference type="EMBL" id="D26185">
    <property type="protein sequence ID" value="BAA05220.1"/>
    <property type="molecule type" value="Genomic_DNA"/>
</dbReference>
<dbReference type="EMBL" id="AL009126">
    <property type="protein sequence ID" value="CAB16127.1"/>
    <property type="molecule type" value="Genomic_DNA"/>
</dbReference>
<dbReference type="PIR" id="S66014">
    <property type="entry name" value="S66014"/>
</dbReference>
<dbReference type="RefSeq" id="NP_391970.1">
    <property type="nucleotide sequence ID" value="NC_000964.3"/>
</dbReference>
<dbReference type="RefSeq" id="WP_003219228.1">
    <property type="nucleotide sequence ID" value="NZ_OZ025638.1"/>
</dbReference>
<dbReference type="PDB" id="6BHW">
    <property type="method" value="X-ray"/>
    <property type="resolution" value="2.21 A"/>
    <property type="chains" value="A/B/C/D/E/F/G/H=1-116"/>
</dbReference>
<dbReference type="PDB" id="6BHX">
    <property type="method" value="X-ray"/>
    <property type="resolution" value="2.94 A"/>
    <property type="chains" value="A/B/C/D=1-116"/>
</dbReference>
<dbReference type="PDBsum" id="6BHW"/>
<dbReference type="PDBsum" id="6BHX"/>
<dbReference type="SMR" id="P37455"/>
<dbReference type="FunCoup" id="P37455">
    <property type="interactions" value="532"/>
</dbReference>
<dbReference type="IntAct" id="P37455">
    <property type="interactions" value="1"/>
</dbReference>
<dbReference type="STRING" id="224308.BSU40900"/>
<dbReference type="iPTMnet" id="P37455"/>
<dbReference type="jPOST" id="P37455"/>
<dbReference type="PaxDb" id="224308-BSU40900"/>
<dbReference type="EnsemblBacteria" id="CAB16127">
    <property type="protein sequence ID" value="CAB16127"/>
    <property type="gene ID" value="BSU_40900"/>
</dbReference>
<dbReference type="GeneID" id="86871268"/>
<dbReference type="GeneID" id="937911"/>
<dbReference type="KEGG" id="bsu:BSU40900"/>
<dbReference type="PATRIC" id="fig|224308.179.peg.4431"/>
<dbReference type="eggNOG" id="COG0629">
    <property type="taxonomic scope" value="Bacteria"/>
</dbReference>
<dbReference type="InParanoid" id="P37455"/>
<dbReference type="OrthoDB" id="9809878at2"/>
<dbReference type="PhylomeDB" id="P37455"/>
<dbReference type="BioCyc" id="BSUB:BSU40900-MONOMER"/>
<dbReference type="Proteomes" id="UP000001570">
    <property type="component" value="Chromosome"/>
</dbReference>
<dbReference type="GO" id="GO:0005737">
    <property type="term" value="C:cytoplasm"/>
    <property type="evidence" value="ECO:0007669"/>
    <property type="project" value="UniProtKB-KW"/>
</dbReference>
<dbReference type="GO" id="GO:0009295">
    <property type="term" value="C:nucleoid"/>
    <property type="evidence" value="ECO:0000318"/>
    <property type="project" value="GO_Central"/>
</dbReference>
<dbReference type="GO" id="GO:0008047">
    <property type="term" value="F:enzyme activator activity"/>
    <property type="evidence" value="ECO:0000318"/>
    <property type="project" value="GO_Central"/>
</dbReference>
<dbReference type="GO" id="GO:0003697">
    <property type="term" value="F:single-stranded DNA binding"/>
    <property type="evidence" value="ECO:0000318"/>
    <property type="project" value="GO_Central"/>
</dbReference>
<dbReference type="GO" id="GO:0006310">
    <property type="term" value="P:DNA recombination"/>
    <property type="evidence" value="ECO:0007669"/>
    <property type="project" value="UniProtKB-UniRule"/>
</dbReference>
<dbReference type="GO" id="GO:0006281">
    <property type="term" value="P:DNA repair"/>
    <property type="evidence" value="ECO:0007669"/>
    <property type="project" value="UniProtKB-UniRule"/>
</dbReference>
<dbReference type="GO" id="GO:0006260">
    <property type="term" value="P:DNA replication"/>
    <property type="evidence" value="ECO:0000318"/>
    <property type="project" value="GO_Central"/>
</dbReference>
<dbReference type="CDD" id="cd04496">
    <property type="entry name" value="SSB_OBF"/>
    <property type="match status" value="1"/>
</dbReference>
<dbReference type="DisProt" id="DP02196"/>
<dbReference type="FunFam" id="2.40.50.140:FF:000084">
    <property type="entry name" value="Single-stranded DNA-binding protein"/>
    <property type="match status" value="1"/>
</dbReference>
<dbReference type="Gene3D" id="2.40.50.140">
    <property type="entry name" value="Nucleic acid-binding proteins"/>
    <property type="match status" value="1"/>
</dbReference>
<dbReference type="HAMAP" id="MF_00984">
    <property type="entry name" value="SSB"/>
    <property type="match status" value="1"/>
</dbReference>
<dbReference type="InterPro" id="IPR012340">
    <property type="entry name" value="NA-bd_OB-fold"/>
</dbReference>
<dbReference type="InterPro" id="IPR000424">
    <property type="entry name" value="Primosome_PriB/ssb"/>
</dbReference>
<dbReference type="InterPro" id="IPR011344">
    <property type="entry name" value="ssDNA-bd"/>
</dbReference>
<dbReference type="NCBIfam" id="TIGR00621">
    <property type="entry name" value="ssb"/>
    <property type="match status" value="1"/>
</dbReference>
<dbReference type="PANTHER" id="PTHR10302">
    <property type="entry name" value="SINGLE-STRANDED DNA-BINDING PROTEIN"/>
    <property type="match status" value="1"/>
</dbReference>
<dbReference type="PANTHER" id="PTHR10302:SF27">
    <property type="entry name" value="SINGLE-STRANDED DNA-BINDING PROTEIN"/>
    <property type="match status" value="1"/>
</dbReference>
<dbReference type="Pfam" id="PF00436">
    <property type="entry name" value="SSB"/>
    <property type="match status" value="1"/>
</dbReference>
<dbReference type="SUPFAM" id="SSF50249">
    <property type="entry name" value="Nucleic acid-binding proteins"/>
    <property type="match status" value="1"/>
</dbReference>
<dbReference type="PROSITE" id="PS50935">
    <property type="entry name" value="SSB"/>
    <property type="match status" value="1"/>
</dbReference>
<proteinExistence type="evidence at protein level"/>
<organism>
    <name type="scientific">Bacillus subtilis (strain 168)</name>
    <dbReference type="NCBI Taxonomy" id="224308"/>
    <lineage>
        <taxon>Bacteria</taxon>
        <taxon>Bacillati</taxon>
        <taxon>Bacillota</taxon>
        <taxon>Bacilli</taxon>
        <taxon>Bacillales</taxon>
        <taxon>Bacillaceae</taxon>
        <taxon>Bacillus</taxon>
    </lineage>
</organism>